<sequence>MSKTPLLDTIRTPDDLRKLRIDQVQQVADELRQETIDAVSVTGGHFGAGLGVVELTTAIHYVFDTPRDRLIWDVGHQAYPHKILTGRRDRIRTLRTAGGLSGFTKRTESDYDPFGAAHSSTSISAGLGMAVARDLAGGTNNVIAVIGDGSISAGMAYEAMNNAGAMNSRLIVILNDNNMSIAPPVGAMSAYLSRLYSGKTYRSLREAGKQIGKHLPKLIADRAARAEEYSRGFMMGGGTLFEELGFYYVGPIDGHNLDHLLPILQNVRDAETGPFLIHVVTQKGKGYAPAEAASDKYHAVVKFDIATGTQAKAKSNAPSYQNVFGQSLVKEAAKDDKVVGITAAMPSGTGIDIFEKAFPDRTFDVGIAEQHAVTFAAGLATEGFKPFCAIYSTFLQRGYDQIVHDVAIQSLPVRFAIDRAGLVGADGATHAGSFDNAYLGCLPNFVIMAASDEAELVHMVATQVAINDRPSAVRYPRGEGRGVEMPDVGVPLEIGKGRVIRQGNKVALLSFGTRLAECEKAAEELATLGLSTTVADARFMKPLDVDLVIKLANEHEILITIEEGSIGGFGSHVMQTLSDHGKLDGEVKMRAMVLPDVFLDHDTPAAMYAAAGLDAKAIVKKVFEALGKEHAAETVKLA</sequence>
<protein>
    <recommendedName>
        <fullName evidence="1">1-deoxy-D-xylulose-5-phosphate synthase</fullName>
        <ecNumber evidence="1">2.2.1.7</ecNumber>
    </recommendedName>
    <alternativeName>
        <fullName evidence="1">1-deoxyxylulose-5-phosphate synthase</fullName>
        <shortName evidence="1">DXP synthase</shortName>
        <shortName evidence="1">DXPS</shortName>
    </alternativeName>
</protein>
<name>DXS_RHOP2</name>
<organism>
    <name type="scientific">Rhodopseudomonas palustris (strain HaA2)</name>
    <dbReference type="NCBI Taxonomy" id="316058"/>
    <lineage>
        <taxon>Bacteria</taxon>
        <taxon>Pseudomonadati</taxon>
        <taxon>Pseudomonadota</taxon>
        <taxon>Alphaproteobacteria</taxon>
        <taxon>Hyphomicrobiales</taxon>
        <taxon>Nitrobacteraceae</taxon>
        <taxon>Rhodopseudomonas</taxon>
    </lineage>
</organism>
<proteinExistence type="inferred from homology"/>
<comment type="function">
    <text evidence="1">Catalyzes the acyloin condensation reaction between C atoms 2 and 3 of pyruvate and glyceraldehyde 3-phosphate to yield 1-deoxy-D-xylulose-5-phosphate (DXP).</text>
</comment>
<comment type="catalytic activity">
    <reaction evidence="1">
        <text>D-glyceraldehyde 3-phosphate + pyruvate + H(+) = 1-deoxy-D-xylulose 5-phosphate + CO2</text>
        <dbReference type="Rhea" id="RHEA:12605"/>
        <dbReference type="ChEBI" id="CHEBI:15361"/>
        <dbReference type="ChEBI" id="CHEBI:15378"/>
        <dbReference type="ChEBI" id="CHEBI:16526"/>
        <dbReference type="ChEBI" id="CHEBI:57792"/>
        <dbReference type="ChEBI" id="CHEBI:59776"/>
        <dbReference type="EC" id="2.2.1.7"/>
    </reaction>
</comment>
<comment type="cofactor">
    <cofactor evidence="1">
        <name>Mg(2+)</name>
        <dbReference type="ChEBI" id="CHEBI:18420"/>
    </cofactor>
    <text evidence="1">Binds 1 Mg(2+) ion per subunit.</text>
</comment>
<comment type="cofactor">
    <cofactor evidence="1">
        <name>thiamine diphosphate</name>
        <dbReference type="ChEBI" id="CHEBI:58937"/>
    </cofactor>
    <text evidence="1">Binds 1 thiamine pyrophosphate per subunit.</text>
</comment>
<comment type="pathway">
    <text evidence="1">Metabolic intermediate biosynthesis; 1-deoxy-D-xylulose 5-phosphate biosynthesis; 1-deoxy-D-xylulose 5-phosphate from D-glyceraldehyde 3-phosphate and pyruvate: step 1/1.</text>
</comment>
<comment type="subunit">
    <text evidence="1">Homodimer.</text>
</comment>
<comment type="similarity">
    <text evidence="1">Belongs to the transketolase family. DXPS subfamily.</text>
</comment>
<reference key="1">
    <citation type="submission" date="2006-01" db="EMBL/GenBank/DDBJ databases">
        <title>Complete sequence of Rhodopseudomonas palustris HaA2.</title>
        <authorList>
            <consortium name="US DOE Joint Genome Institute"/>
            <person name="Copeland A."/>
            <person name="Lucas S."/>
            <person name="Lapidus A."/>
            <person name="Barry K."/>
            <person name="Detter J.C."/>
            <person name="Glavina T."/>
            <person name="Hammon N."/>
            <person name="Israni S."/>
            <person name="Pitluck S."/>
            <person name="Chain P."/>
            <person name="Malfatti S."/>
            <person name="Shin M."/>
            <person name="Vergez L."/>
            <person name="Schmutz J."/>
            <person name="Larimer F."/>
            <person name="Land M."/>
            <person name="Hauser L."/>
            <person name="Pelletier D.A."/>
            <person name="Kyrpides N."/>
            <person name="Anderson I."/>
            <person name="Oda Y."/>
            <person name="Harwood C.S."/>
            <person name="Richardson P."/>
        </authorList>
    </citation>
    <scope>NUCLEOTIDE SEQUENCE [LARGE SCALE GENOMIC DNA]</scope>
    <source>
        <strain>HaA2</strain>
    </source>
</reference>
<feature type="chain" id="PRO_0000256470" description="1-deoxy-D-xylulose-5-phosphate synthase">
    <location>
        <begin position="1"/>
        <end position="638"/>
    </location>
</feature>
<feature type="binding site" evidence="1">
    <location>
        <position position="76"/>
    </location>
    <ligand>
        <name>thiamine diphosphate</name>
        <dbReference type="ChEBI" id="CHEBI:58937"/>
    </ligand>
</feature>
<feature type="binding site" evidence="1">
    <location>
        <begin position="117"/>
        <end position="119"/>
    </location>
    <ligand>
        <name>thiamine diphosphate</name>
        <dbReference type="ChEBI" id="CHEBI:58937"/>
    </ligand>
</feature>
<feature type="binding site" evidence="1">
    <location>
        <position position="148"/>
    </location>
    <ligand>
        <name>Mg(2+)</name>
        <dbReference type="ChEBI" id="CHEBI:18420"/>
    </ligand>
</feature>
<feature type="binding site" evidence="1">
    <location>
        <begin position="149"/>
        <end position="150"/>
    </location>
    <ligand>
        <name>thiamine diphosphate</name>
        <dbReference type="ChEBI" id="CHEBI:58937"/>
    </ligand>
</feature>
<feature type="binding site" evidence="1">
    <location>
        <position position="177"/>
    </location>
    <ligand>
        <name>Mg(2+)</name>
        <dbReference type="ChEBI" id="CHEBI:18420"/>
    </ligand>
</feature>
<feature type="binding site" evidence="1">
    <location>
        <position position="177"/>
    </location>
    <ligand>
        <name>thiamine diphosphate</name>
        <dbReference type="ChEBI" id="CHEBI:58937"/>
    </ligand>
</feature>
<feature type="binding site" evidence="1">
    <location>
        <position position="287"/>
    </location>
    <ligand>
        <name>thiamine diphosphate</name>
        <dbReference type="ChEBI" id="CHEBI:58937"/>
    </ligand>
</feature>
<feature type="binding site" evidence="1">
    <location>
        <position position="369"/>
    </location>
    <ligand>
        <name>thiamine diphosphate</name>
        <dbReference type="ChEBI" id="CHEBI:58937"/>
    </ligand>
</feature>
<dbReference type="EC" id="2.2.1.7" evidence="1"/>
<dbReference type="EMBL" id="CP000250">
    <property type="protein sequence ID" value="ABD09143.1"/>
    <property type="molecule type" value="Genomic_DNA"/>
</dbReference>
<dbReference type="RefSeq" id="WP_011443326.1">
    <property type="nucleotide sequence ID" value="NC_007778.1"/>
</dbReference>
<dbReference type="SMR" id="Q2IRL7"/>
<dbReference type="STRING" id="316058.RPB_4460"/>
<dbReference type="KEGG" id="rpb:RPB_4460"/>
<dbReference type="eggNOG" id="COG1154">
    <property type="taxonomic scope" value="Bacteria"/>
</dbReference>
<dbReference type="HOGENOM" id="CLU_009227_1_4_5"/>
<dbReference type="UniPathway" id="UPA00064">
    <property type="reaction ID" value="UER00091"/>
</dbReference>
<dbReference type="Proteomes" id="UP000008809">
    <property type="component" value="Chromosome"/>
</dbReference>
<dbReference type="GO" id="GO:0008661">
    <property type="term" value="F:1-deoxy-D-xylulose-5-phosphate synthase activity"/>
    <property type="evidence" value="ECO:0007669"/>
    <property type="project" value="UniProtKB-UniRule"/>
</dbReference>
<dbReference type="GO" id="GO:0000287">
    <property type="term" value="F:magnesium ion binding"/>
    <property type="evidence" value="ECO:0007669"/>
    <property type="project" value="UniProtKB-UniRule"/>
</dbReference>
<dbReference type="GO" id="GO:0030976">
    <property type="term" value="F:thiamine pyrophosphate binding"/>
    <property type="evidence" value="ECO:0007669"/>
    <property type="project" value="UniProtKB-UniRule"/>
</dbReference>
<dbReference type="GO" id="GO:0052865">
    <property type="term" value="P:1-deoxy-D-xylulose 5-phosphate biosynthetic process"/>
    <property type="evidence" value="ECO:0007669"/>
    <property type="project" value="UniProtKB-UniPathway"/>
</dbReference>
<dbReference type="GO" id="GO:0019682">
    <property type="term" value="P:glyceraldehyde-3-phosphate metabolic process"/>
    <property type="evidence" value="ECO:0007669"/>
    <property type="project" value="UniProtKB-ARBA"/>
</dbReference>
<dbReference type="GO" id="GO:0016114">
    <property type="term" value="P:terpenoid biosynthetic process"/>
    <property type="evidence" value="ECO:0007669"/>
    <property type="project" value="UniProtKB-UniRule"/>
</dbReference>
<dbReference type="GO" id="GO:0009228">
    <property type="term" value="P:thiamine biosynthetic process"/>
    <property type="evidence" value="ECO:0007669"/>
    <property type="project" value="UniProtKB-UniRule"/>
</dbReference>
<dbReference type="CDD" id="cd02007">
    <property type="entry name" value="TPP_DXS"/>
    <property type="match status" value="1"/>
</dbReference>
<dbReference type="CDD" id="cd07033">
    <property type="entry name" value="TPP_PYR_DXS_TK_like"/>
    <property type="match status" value="1"/>
</dbReference>
<dbReference type="FunFam" id="3.40.50.920:FF:000002">
    <property type="entry name" value="1-deoxy-D-xylulose-5-phosphate synthase"/>
    <property type="match status" value="1"/>
</dbReference>
<dbReference type="FunFam" id="3.40.50.970:FF:000005">
    <property type="entry name" value="1-deoxy-D-xylulose-5-phosphate synthase"/>
    <property type="match status" value="1"/>
</dbReference>
<dbReference type="Gene3D" id="3.40.50.920">
    <property type="match status" value="1"/>
</dbReference>
<dbReference type="Gene3D" id="3.40.50.970">
    <property type="match status" value="2"/>
</dbReference>
<dbReference type="HAMAP" id="MF_00315">
    <property type="entry name" value="DXP_synth"/>
    <property type="match status" value="1"/>
</dbReference>
<dbReference type="InterPro" id="IPR005477">
    <property type="entry name" value="Dxylulose-5-P_synthase"/>
</dbReference>
<dbReference type="InterPro" id="IPR029061">
    <property type="entry name" value="THDP-binding"/>
</dbReference>
<dbReference type="InterPro" id="IPR009014">
    <property type="entry name" value="Transketo_C/PFOR_II"/>
</dbReference>
<dbReference type="InterPro" id="IPR005475">
    <property type="entry name" value="Transketolase-like_Pyr-bd"/>
</dbReference>
<dbReference type="InterPro" id="IPR020826">
    <property type="entry name" value="Transketolase_BS"/>
</dbReference>
<dbReference type="InterPro" id="IPR033248">
    <property type="entry name" value="Transketolase_C"/>
</dbReference>
<dbReference type="InterPro" id="IPR049557">
    <property type="entry name" value="Transketolase_CS"/>
</dbReference>
<dbReference type="NCBIfam" id="TIGR00204">
    <property type="entry name" value="dxs"/>
    <property type="match status" value="1"/>
</dbReference>
<dbReference type="NCBIfam" id="NF003933">
    <property type="entry name" value="PRK05444.2-2"/>
    <property type="match status" value="1"/>
</dbReference>
<dbReference type="PANTHER" id="PTHR43322">
    <property type="entry name" value="1-D-DEOXYXYLULOSE 5-PHOSPHATE SYNTHASE-RELATED"/>
    <property type="match status" value="1"/>
</dbReference>
<dbReference type="PANTHER" id="PTHR43322:SF5">
    <property type="entry name" value="1-DEOXY-D-XYLULOSE-5-PHOSPHATE SYNTHASE, CHLOROPLASTIC"/>
    <property type="match status" value="1"/>
</dbReference>
<dbReference type="Pfam" id="PF13292">
    <property type="entry name" value="DXP_synthase_N"/>
    <property type="match status" value="1"/>
</dbReference>
<dbReference type="Pfam" id="PF02779">
    <property type="entry name" value="Transket_pyr"/>
    <property type="match status" value="1"/>
</dbReference>
<dbReference type="Pfam" id="PF02780">
    <property type="entry name" value="Transketolase_C"/>
    <property type="match status" value="1"/>
</dbReference>
<dbReference type="SMART" id="SM00861">
    <property type="entry name" value="Transket_pyr"/>
    <property type="match status" value="1"/>
</dbReference>
<dbReference type="SUPFAM" id="SSF52518">
    <property type="entry name" value="Thiamin diphosphate-binding fold (THDP-binding)"/>
    <property type="match status" value="2"/>
</dbReference>
<dbReference type="SUPFAM" id="SSF52922">
    <property type="entry name" value="TK C-terminal domain-like"/>
    <property type="match status" value="1"/>
</dbReference>
<dbReference type="PROSITE" id="PS00801">
    <property type="entry name" value="TRANSKETOLASE_1"/>
    <property type="match status" value="1"/>
</dbReference>
<dbReference type="PROSITE" id="PS00802">
    <property type="entry name" value="TRANSKETOLASE_2"/>
    <property type="match status" value="1"/>
</dbReference>
<gene>
    <name evidence="1" type="primary">dxs</name>
    <name type="ordered locus">RPB_4460</name>
</gene>
<accession>Q2IRL7</accession>
<evidence type="ECO:0000255" key="1">
    <source>
        <dbReference type="HAMAP-Rule" id="MF_00315"/>
    </source>
</evidence>
<keyword id="KW-0414">Isoprene biosynthesis</keyword>
<keyword id="KW-0460">Magnesium</keyword>
<keyword id="KW-0479">Metal-binding</keyword>
<keyword id="KW-1185">Reference proteome</keyword>
<keyword id="KW-0784">Thiamine biosynthesis</keyword>
<keyword id="KW-0786">Thiamine pyrophosphate</keyword>
<keyword id="KW-0808">Transferase</keyword>